<organism>
    <name type="scientific">Clostridium perfringens (strain ATCC 13124 / DSM 756 / JCM 1290 / NCIMB 6125 / NCTC 8237 / Type A)</name>
    <dbReference type="NCBI Taxonomy" id="195103"/>
    <lineage>
        <taxon>Bacteria</taxon>
        <taxon>Bacillati</taxon>
        <taxon>Bacillota</taxon>
        <taxon>Clostridia</taxon>
        <taxon>Eubacteriales</taxon>
        <taxon>Clostridiaceae</taxon>
        <taxon>Clostridium</taxon>
    </lineage>
</organism>
<feature type="chain" id="PRO_1000006665" description="Aspartate--tRNA ligase">
    <location>
        <begin position="1"/>
        <end position="597"/>
    </location>
</feature>
<feature type="region of interest" description="Aspartate" evidence="1">
    <location>
        <begin position="204"/>
        <end position="207"/>
    </location>
</feature>
<feature type="binding site" evidence="1">
    <location>
        <position position="180"/>
    </location>
    <ligand>
        <name>L-aspartate</name>
        <dbReference type="ChEBI" id="CHEBI:29991"/>
    </ligand>
</feature>
<feature type="binding site" evidence="1">
    <location>
        <begin position="226"/>
        <end position="228"/>
    </location>
    <ligand>
        <name>ATP</name>
        <dbReference type="ChEBI" id="CHEBI:30616"/>
    </ligand>
</feature>
<feature type="binding site" evidence="1">
    <location>
        <position position="226"/>
    </location>
    <ligand>
        <name>L-aspartate</name>
        <dbReference type="ChEBI" id="CHEBI:29991"/>
    </ligand>
</feature>
<feature type="binding site" evidence="1">
    <location>
        <position position="235"/>
    </location>
    <ligand>
        <name>ATP</name>
        <dbReference type="ChEBI" id="CHEBI:30616"/>
    </ligand>
</feature>
<feature type="binding site" evidence="1">
    <location>
        <position position="454"/>
    </location>
    <ligand>
        <name>L-aspartate</name>
        <dbReference type="ChEBI" id="CHEBI:29991"/>
    </ligand>
</feature>
<feature type="binding site" evidence="1">
    <location>
        <position position="488"/>
    </location>
    <ligand>
        <name>ATP</name>
        <dbReference type="ChEBI" id="CHEBI:30616"/>
    </ligand>
</feature>
<feature type="binding site" evidence="1">
    <location>
        <position position="495"/>
    </location>
    <ligand>
        <name>L-aspartate</name>
        <dbReference type="ChEBI" id="CHEBI:29991"/>
    </ligand>
</feature>
<feature type="binding site" evidence="1">
    <location>
        <begin position="540"/>
        <end position="543"/>
    </location>
    <ligand>
        <name>ATP</name>
        <dbReference type="ChEBI" id="CHEBI:30616"/>
    </ligand>
</feature>
<accession>Q0TP28</accession>
<name>SYD_CLOP1</name>
<sequence>MGEALNGLKRNIMCGDARESHIGQKVTVMGWVQRNRNLGGLQFIDLRDREGILQVVFNDDLGEEILEKAKSIRPEYCIAVTGEIVKRESVNPNMPTGMVELKAEELKILSESDTPPIYIKEDLDAAESIRLKYRYLDLRRPDMQNIFKIRHKTTKAIRDYLDQNGFLEMETPILTKSTPEGARDYLVPSRNYPGMFYALPQSPQLFKQLLMVSGFDRYFQIVKCFRDEDLRANRQPEFTQVDLEMSFVEQDDVMALNEGLIKHVFKEVLGVDVKTPIKRMTFKDAMEKYGSDKPDLRFGMEITNLSDVVKECGFKVFTDAVANGGSVRGLCLEGGASMGRKDIDRLGEFVKTFKAKGLAWIQLKEEGVKSPIAKFFSEEELNKIIETMGAKTGDLILIVADKNSVVLKALGELRLELSRKFDLVKDKSEFNFTWITEFDLLEYDEEEGRYFAAHHPFTMPMDEDIKYLDTDPGRVRAKAYDLVLNGEELGGGSIRIHDTKLQEKMFEVLGFTQESAWERFGFLLEAFKFGPPPHGGLAFGLDRMIMFLAGTENIKDVITFPKNQNAFCYLTEAPNIVDEEQLKELGIETIKKEDTAE</sequence>
<comment type="function">
    <text evidence="1">Catalyzes the attachment of L-aspartate to tRNA(Asp) in a two-step reaction: L-aspartate is first activated by ATP to form Asp-AMP and then transferred to the acceptor end of tRNA(Asp).</text>
</comment>
<comment type="catalytic activity">
    <reaction evidence="1">
        <text>tRNA(Asp) + L-aspartate + ATP = L-aspartyl-tRNA(Asp) + AMP + diphosphate</text>
        <dbReference type="Rhea" id="RHEA:19649"/>
        <dbReference type="Rhea" id="RHEA-COMP:9660"/>
        <dbReference type="Rhea" id="RHEA-COMP:9678"/>
        <dbReference type="ChEBI" id="CHEBI:29991"/>
        <dbReference type="ChEBI" id="CHEBI:30616"/>
        <dbReference type="ChEBI" id="CHEBI:33019"/>
        <dbReference type="ChEBI" id="CHEBI:78442"/>
        <dbReference type="ChEBI" id="CHEBI:78516"/>
        <dbReference type="ChEBI" id="CHEBI:456215"/>
        <dbReference type="EC" id="6.1.1.12"/>
    </reaction>
</comment>
<comment type="subunit">
    <text evidence="1">Homodimer.</text>
</comment>
<comment type="subcellular location">
    <subcellularLocation>
        <location evidence="1">Cytoplasm</location>
    </subcellularLocation>
</comment>
<comment type="similarity">
    <text evidence="1">Belongs to the class-II aminoacyl-tRNA synthetase family. Type 1 subfamily.</text>
</comment>
<reference key="1">
    <citation type="journal article" date="2006" name="Genome Res.">
        <title>Skewed genomic variability in strains of the toxigenic bacterial pathogen, Clostridium perfringens.</title>
        <authorList>
            <person name="Myers G.S.A."/>
            <person name="Rasko D.A."/>
            <person name="Cheung J.K."/>
            <person name="Ravel J."/>
            <person name="Seshadri R."/>
            <person name="DeBoy R.T."/>
            <person name="Ren Q."/>
            <person name="Varga J."/>
            <person name="Awad M.M."/>
            <person name="Brinkac L.M."/>
            <person name="Daugherty S.C."/>
            <person name="Haft D.H."/>
            <person name="Dodson R.J."/>
            <person name="Madupu R."/>
            <person name="Nelson W.C."/>
            <person name="Rosovitz M.J."/>
            <person name="Sullivan S.A."/>
            <person name="Khouri H."/>
            <person name="Dimitrov G.I."/>
            <person name="Watkins K.L."/>
            <person name="Mulligan S."/>
            <person name="Benton J."/>
            <person name="Radune D."/>
            <person name="Fisher D.J."/>
            <person name="Atkins H.S."/>
            <person name="Hiscox T."/>
            <person name="Jost B.H."/>
            <person name="Billington S.J."/>
            <person name="Songer J.G."/>
            <person name="McClane B.A."/>
            <person name="Titball R.W."/>
            <person name="Rood J.I."/>
            <person name="Melville S.B."/>
            <person name="Paulsen I.T."/>
        </authorList>
    </citation>
    <scope>NUCLEOTIDE SEQUENCE [LARGE SCALE GENOMIC DNA]</scope>
    <source>
        <strain>ATCC 13124 / DSM 756 / JCM 1290 / NCIMB 6125 / NCTC 8237 / S 107 / Type A</strain>
    </source>
</reference>
<keyword id="KW-0030">Aminoacyl-tRNA synthetase</keyword>
<keyword id="KW-0067">ATP-binding</keyword>
<keyword id="KW-0963">Cytoplasm</keyword>
<keyword id="KW-0436">Ligase</keyword>
<keyword id="KW-0547">Nucleotide-binding</keyword>
<keyword id="KW-0648">Protein biosynthesis</keyword>
<proteinExistence type="inferred from homology"/>
<protein>
    <recommendedName>
        <fullName evidence="1">Aspartate--tRNA ligase</fullName>
        <ecNumber evidence="1">6.1.1.12</ecNumber>
    </recommendedName>
    <alternativeName>
        <fullName evidence="1">Aspartyl-tRNA synthetase</fullName>
        <shortName evidence="1">AspRS</shortName>
    </alternativeName>
</protein>
<dbReference type="EC" id="6.1.1.12" evidence="1"/>
<dbReference type="EMBL" id="CP000246">
    <property type="protein sequence ID" value="ABG84922.1"/>
    <property type="molecule type" value="Genomic_DNA"/>
</dbReference>
<dbReference type="RefSeq" id="WP_003451272.1">
    <property type="nucleotide sequence ID" value="NC_008261.1"/>
</dbReference>
<dbReference type="SMR" id="Q0TP28"/>
<dbReference type="STRING" id="195103.CPF_2188"/>
<dbReference type="PaxDb" id="195103-CPF_2188"/>
<dbReference type="KEGG" id="cpf:CPF_2188"/>
<dbReference type="eggNOG" id="COG0173">
    <property type="taxonomic scope" value="Bacteria"/>
</dbReference>
<dbReference type="HOGENOM" id="CLU_014330_3_2_9"/>
<dbReference type="Proteomes" id="UP000001823">
    <property type="component" value="Chromosome"/>
</dbReference>
<dbReference type="GO" id="GO:0005737">
    <property type="term" value="C:cytoplasm"/>
    <property type="evidence" value="ECO:0007669"/>
    <property type="project" value="UniProtKB-SubCell"/>
</dbReference>
<dbReference type="GO" id="GO:0004815">
    <property type="term" value="F:aspartate-tRNA ligase activity"/>
    <property type="evidence" value="ECO:0007669"/>
    <property type="project" value="UniProtKB-UniRule"/>
</dbReference>
<dbReference type="GO" id="GO:0005524">
    <property type="term" value="F:ATP binding"/>
    <property type="evidence" value="ECO:0007669"/>
    <property type="project" value="UniProtKB-UniRule"/>
</dbReference>
<dbReference type="GO" id="GO:0140096">
    <property type="term" value="F:catalytic activity, acting on a protein"/>
    <property type="evidence" value="ECO:0007669"/>
    <property type="project" value="UniProtKB-ARBA"/>
</dbReference>
<dbReference type="GO" id="GO:0003676">
    <property type="term" value="F:nucleic acid binding"/>
    <property type="evidence" value="ECO:0007669"/>
    <property type="project" value="InterPro"/>
</dbReference>
<dbReference type="GO" id="GO:0016740">
    <property type="term" value="F:transferase activity"/>
    <property type="evidence" value="ECO:0007669"/>
    <property type="project" value="UniProtKB-ARBA"/>
</dbReference>
<dbReference type="GO" id="GO:0006422">
    <property type="term" value="P:aspartyl-tRNA aminoacylation"/>
    <property type="evidence" value="ECO:0007669"/>
    <property type="project" value="UniProtKB-UniRule"/>
</dbReference>
<dbReference type="CDD" id="cd00777">
    <property type="entry name" value="AspRS_core"/>
    <property type="match status" value="1"/>
</dbReference>
<dbReference type="CDD" id="cd04317">
    <property type="entry name" value="EcAspRS_like_N"/>
    <property type="match status" value="1"/>
</dbReference>
<dbReference type="Gene3D" id="3.30.930.10">
    <property type="entry name" value="Bira Bifunctional Protein, Domain 2"/>
    <property type="match status" value="1"/>
</dbReference>
<dbReference type="Gene3D" id="3.30.1360.30">
    <property type="entry name" value="GAD-like domain"/>
    <property type="match status" value="1"/>
</dbReference>
<dbReference type="Gene3D" id="2.40.50.140">
    <property type="entry name" value="Nucleic acid-binding proteins"/>
    <property type="match status" value="1"/>
</dbReference>
<dbReference type="HAMAP" id="MF_00044">
    <property type="entry name" value="Asp_tRNA_synth_type1"/>
    <property type="match status" value="1"/>
</dbReference>
<dbReference type="InterPro" id="IPR004364">
    <property type="entry name" value="Aa-tRNA-synt_II"/>
</dbReference>
<dbReference type="InterPro" id="IPR006195">
    <property type="entry name" value="aa-tRNA-synth_II"/>
</dbReference>
<dbReference type="InterPro" id="IPR045864">
    <property type="entry name" value="aa-tRNA-synth_II/BPL/LPL"/>
</dbReference>
<dbReference type="InterPro" id="IPR004524">
    <property type="entry name" value="Asp-tRNA-ligase_1"/>
</dbReference>
<dbReference type="InterPro" id="IPR047089">
    <property type="entry name" value="Asp-tRNA-ligase_1_N"/>
</dbReference>
<dbReference type="InterPro" id="IPR002312">
    <property type="entry name" value="Asp/Asn-tRNA-synth_IIb"/>
</dbReference>
<dbReference type="InterPro" id="IPR047090">
    <property type="entry name" value="AspRS_core"/>
</dbReference>
<dbReference type="InterPro" id="IPR004115">
    <property type="entry name" value="GAD-like_sf"/>
</dbReference>
<dbReference type="InterPro" id="IPR029351">
    <property type="entry name" value="GAD_dom"/>
</dbReference>
<dbReference type="InterPro" id="IPR012340">
    <property type="entry name" value="NA-bd_OB-fold"/>
</dbReference>
<dbReference type="InterPro" id="IPR004365">
    <property type="entry name" value="NA-bd_OB_tRNA"/>
</dbReference>
<dbReference type="NCBIfam" id="TIGR00459">
    <property type="entry name" value="aspS_bact"/>
    <property type="match status" value="1"/>
</dbReference>
<dbReference type="NCBIfam" id="NF001750">
    <property type="entry name" value="PRK00476.1"/>
    <property type="match status" value="1"/>
</dbReference>
<dbReference type="PANTHER" id="PTHR22594:SF5">
    <property type="entry name" value="ASPARTATE--TRNA LIGASE, MITOCHONDRIAL"/>
    <property type="match status" value="1"/>
</dbReference>
<dbReference type="PANTHER" id="PTHR22594">
    <property type="entry name" value="ASPARTYL/LYSYL-TRNA SYNTHETASE"/>
    <property type="match status" value="1"/>
</dbReference>
<dbReference type="Pfam" id="PF02938">
    <property type="entry name" value="GAD"/>
    <property type="match status" value="1"/>
</dbReference>
<dbReference type="Pfam" id="PF00152">
    <property type="entry name" value="tRNA-synt_2"/>
    <property type="match status" value="1"/>
</dbReference>
<dbReference type="Pfam" id="PF01336">
    <property type="entry name" value="tRNA_anti-codon"/>
    <property type="match status" value="1"/>
</dbReference>
<dbReference type="PRINTS" id="PR01042">
    <property type="entry name" value="TRNASYNTHASP"/>
</dbReference>
<dbReference type="SUPFAM" id="SSF55681">
    <property type="entry name" value="Class II aaRS and biotin synthetases"/>
    <property type="match status" value="1"/>
</dbReference>
<dbReference type="SUPFAM" id="SSF55261">
    <property type="entry name" value="GAD domain-like"/>
    <property type="match status" value="1"/>
</dbReference>
<dbReference type="SUPFAM" id="SSF50249">
    <property type="entry name" value="Nucleic acid-binding proteins"/>
    <property type="match status" value="1"/>
</dbReference>
<dbReference type="PROSITE" id="PS50862">
    <property type="entry name" value="AA_TRNA_LIGASE_II"/>
    <property type="match status" value="1"/>
</dbReference>
<evidence type="ECO:0000255" key="1">
    <source>
        <dbReference type="HAMAP-Rule" id="MF_00044"/>
    </source>
</evidence>
<gene>
    <name evidence="1" type="primary">aspS</name>
    <name type="ordered locus">CPF_2188</name>
</gene>